<dbReference type="EC" id="2.1.1.199" evidence="1"/>
<dbReference type="EMBL" id="CP001103">
    <property type="protein sequence ID" value="AEA99172.1"/>
    <property type="molecule type" value="Genomic_DNA"/>
</dbReference>
<dbReference type="RefSeq" id="WP_012519464.1">
    <property type="nucleotide sequence ID" value="NC_011138.3"/>
</dbReference>
<dbReference type="SMR" id="B4RWY7"/>
<dbReference type="KEGG" id="amc:MADE_1015190"/>
<dbReference type="HOGENOM" id="CLU_038422_2_0_6"/>
<dbReference type="Proteomes" id="UP000001870">
    <property type="component" value="Chromosome"/>
</dbReference>
<dbReference type="GO" id="GO:0005737">
    <property type="term" value="C:cytoplasm"/>
    <property type="evidence" value="ECO:0007669"/>
    <property type="project" value="UniProtKB-SubCell"/>
</dbReference>
<dbReference type="GO" id="GO:0071424">
    <property type="term" value="F:rRNA (cytosine-N4-)-methyltransferase activity"/>
    <property type="evidence" value="ECO:0007669"/>
    <property type="project" value="UniProtKB-UniRule"/>
</dbReference>
<dbReference type="GO" id="GO:0070475">
    <property type="term" value="P:rRNA base methylation"/>
    <property type="evidence" value="ECO:0007669"/>
    <property type="project" value="UniProtKB-UniRule"/>
</dbReference>
<dbReference type="FunFam" id="1.10.150.170:FF:000001">
    <property type="entry name" value="Ribosomal RNA small subunit methyltransferase H"/>
    <property type="match status" value="1"/>
</dbReference>
<dbReference type="Gene3D" id="1.10.150.170">
    <property type="entry name" value="Putative methyltransferase TM0872, insert domain"/>
    <property type="match status" value="1"/>
</dbReference>
<dbReference type="Gene3D" id="3.40.50.150">
    <property type="entry name" value="Vaccinia Virus protein VP39"/>
    <property type="match status" value="1"/>
</dbReference>
<dbReference type="HAMAP" id="MF_01007">
    <property type="entry name" value="16SrRNA_methyltr_H"/>
    <property type="match status" value="1"/>
</dbReference>
<dbReference type="InterPro" id="IPR002903">
    <property type="entry name" value="RsmH"/>
</dbReference>
<dbReference type="InterPro" id="IPR023397">
    <property type="entry name" value="SAM-dep_MeTrfase_MraW_recog"/>
</dbReference>
<dbReference type="InterPro" id="IPR029063">
    <property type="entry name" value="SAM-dependent_MTases_sf"/>
</dbReference>
<dbReference type="NCBIfam" id="TIGR00006">
    <property type="entry name" value="16S rRNA (cytosine(1402)-N(4))-methyltransferase RsmH"/>
    <property type="match status" value="1"/>
</dbReference>
<dbReference type="PANTHER" id="PTHR11265:SF0">
    <property type="entry name" value="12S RRNA N4-METHYLCYTIDINE METHYLTRANSFERASE"/>
    <property type="match status" value="1"/>
</dbReference>
<dbReference type="PANTHER" id="PTHR11265">
    <property type="entry name" value="S-ADENOSYL-METHYLTRANSFERASE MRAW"/>
    <property type="match status" value="1"/>
</dbReference>
<dbReference type="Pfam" id="PF01795">
    <property type="entry name" value="Methyltransf_5"/>
    <property type="match status" value="1"/>
</dbReference>
<dbReference type="PIRSF" id="PIRSF004486">
    <property type="entry name" value="MraW"/>
    <property type="match status" value="1"/>
</dbReference>
<dbReference type="SUPFAM" id="SSF81799">
    <property type="entry name" value="Putative methyltransferase TM0872, insert domain"/>
    <property type="match status" value="1"/>
</dbReference>
<dbReference type="SUPFAM" id="SSF53335">
    <property type="entry name" value="S-adenosyl-L-methionine-dependent methyltransferases"/>
    <property type="match status" value="1"/>
</dbReference>
<feature type="chain" id="PRO_0000386709" description="Ribosomal RNA small subunit methyltransferase H">
    <location>
        <begin position="1"/>
        <end position="313"/>
    </location>
</feature>
<feature type="binding site" evidence="1">
    <location>
        <begin position="37"/>
        <end position="39"/>
    </location>
    <ligand>
        <name>S-adenosyl-L-methionine</name>
        <dbReference type="ChEBI" id="CHEBI:59789"/>
    </ligand>
</feature>
<feature type="binding site" evidence="1">
    <location>
        <position position="57"/>
    </location>
    <ligand>
        <name>S-adenosyl-L-methionine</name>
        <dbReference type="ChEBI" id="CHEBI:59789"/>
    </ligand>
</feature>
<feature type="binding site" evidence="1">
    <location>
        <position position="82"/>
    </location>
    <ligand>
        <name>S-adenosyl-L-methionine</name>
        <dbReference type="ChEBI" id="CHEBI:59789"/>
    </ligand>
</feature>
<feature type="binding site" evidence="1">
    <location>
        <position position="104"/>
    </location>
    <ligand>
        <name>S-adenosyl-L-methionine</name>
        <dbReference type="ChEBI" id="CHEBI:59789"/>
    </ligand>
</feature>
<feature type="binding site" evidence="1">
    <location>
        <position position="111"/>
    </location>
    <ligand>
        <name>S-adenosyl-L-methionine</name>
        <dbReference type="ChEBI" id="CHEBI:59789"/>
    </ligand>
</feature>
<accession>B4RWY7</accession>
<accession>F2GD25</accession>
<proteinExistence type="inferred from homology"/>
<evidence type="ECO:0000255" key="1">
    <source>
        <dbReference type="HAMAP-Rule" id="MF_01007"/>
    </source>
</evidence>
<keyword id="KW-0963">Cytoplasm</keyword>
<keyword id="KW-0489">Methyltransferase</keyword>
<keyword id="KW-0698">rRNA processing</keyword>
<keyword id="KW-0949">S-adenosyl-L-methionine</keyword>
<keyword id="KW-0808">Transferase</keyword>
<sequence>MTQPNEFKHISVLLDECIEALAIKPNGIYIDATFGRGGHSAHILDALGEKGRLIAFDRDPQAIKAAERFADDKRFSIIHSPFGDMAEEIEALGLTGKIDGVLMDLGVSSPQLDDAERGFSFLRDGPLDMRMDTSRGQSAADWLASAEEQDITQVIKEFGEEKFGKRIAHAIVNTRKDTPITRTAQLAKIIDEAVPVKDKFKHPATRAFQGIRIYINAELEQLRVGLKAATQVLAKEGRLAVISFHSLEDRLVKRFIKDQSKGKVVPHNLPITQAEIDADKVLKALGKAIKPSEQEIANNVRSRSSVLRVAEKL</sequence>
<comment type="function">
    <text evidence="1">Specifically methylates the N4 position of cytidine in position 1402 (C1402) of 16S rRNA.</text>
</comment>
<comment type="catalytic activity">
    <reaction evidence="1">
        <text>cytidine(1402) in 16S rRNA + S-adenosyl-L-methionine = N(4)-methylcytidine(1402) in 16S rRNA + S-adenosyl-L-homocysteine + H(+)</text>
        <dbReference type="Rhea" id="RHEA:42928"/>
        <dbReference type="Rhea" id="RHEA-COMP:10286"/>
        <dbReference type="Rhea" id="RHEA-COMP:10287"/>
        <dbReference type="ChEBI" id="CHEBI:15378"/>
        <dbReference type="ChEBI" id="CHEBI:57856"/>
        <dbReference type="ChEBI" id="CHEBI:59789"/>
        <dbReference type="ChEBI" id="CHEBI:74506"/>
        <dbReference type="ChEBI" id="CHEBI:82748"/>
        <dbReference type="EC" id="2.1.1.199"/>
    </reaction>
</comment>
<comment type="subcellular location">
    <subcellularLocation>
        <location evidence="1">Cytoplasm</location>
    </subcellularLocation>
</comment>
<comment type="similarity">
    <text evidence="1">Belongs to the methyltransferase superfamily. RsmH family.</text>
</comment>
<organism>
    <name type="scientific">Alteromonas mediterranea (strain DSM 17117 / CIP 110805 / LMG 28347 / Deep ecotype)</name>
    <dbReference type="NCBI Taxonomy" id="1774373"/>
    <lineage>
        <taxon>Bacteria</taxon>
        <taxon>Pseudomonadati</taxon>
        <taxon>Pseudomonadota</taxon>
        <taxon>Gammaproteobacteria</taxon>
        <taxon>Alteromonadales</taxon>
        <taxon>Alteromonadaceae</taxon>
        <taxon>Alteromonas/Salinimonas group</taxon>
        <taxon>Alteromonas</taxon>
    </lineage>
</organism>
<reference key="1">
    <citation type="journal article" date="2008" name="ISME J.">
        <title>Comparative genomics of two ecotypes of the marine planktonic copiotroph Alteromonas macleodii suggests alternative lifestyles associated with different kinds of particulate organic matter.</title>
        <authorList>
            <person name="Ivars-Martinez E."/>
            <person name="Martin-Cuadrado A.-B."/>
            <person name="D'Auria G."/>
            <person name="Mira A."/>
            <person name="Ferriera S."/>
            <person name="Johnson J."/>
            <person name="Friedman R."/>
            <person name="Rodriguez-Valera F."/>
        </authorList>
    </citation>
    <scope>NUCLEOTIDE SEQUENCE [LARGE SCALE GENOMIC DNA]</scope>
    <source>
        <strain>DSM 17117 / CIP 110805 / LMG 28347 / Deep ecotype</strain>
    </source>
</reference>
<name>RSMH_ALTMD</name>
<protein>
    <recommendedName>
        <fullName evidence="1">Ribosomal RNA small subunit methyltransferase H</fullName>
        <ecNumber evidence="1">2.1.1.199</ecNumber>
    </recommendedName>
    <alternativeName>
        <fullName evidence="1">16S rRNA m(4)C1402 methyltransferase</fullName>
    </alternativeName>
    <alternativeName>
        <fullName evidence="1">rRNA (cytosine-N(4)-)-methyltransferase RsmH</fullName>
    </alternativeName>
</protein>
<gene>
    <name evidence="1" type="primary">rsmH</name>
    <name type="synonym">mraW</name>
    <name type="ordered locus">MADE_1015190</name>
</gene>